<reference key="1">
    <citation type="journal article" date="2004" name="Nat. Genet.">
        <title>Complete sequencing and characterization of 21,243 full-length human cDNAs.</title>
        <authorList>
            <person name="Ota T."/>
            <person name="Suzuki Y."/>
            <person name="Nishikawa T."/>
            <person name="Otsuki T."/>
            <person name="Sugiyama T."/>
            <person name="Irie R."/>
            <person name="Wakamatsu A."/>
            <person name="Hayashi K."/>
            <person name="Sato H."/>
            <person name="Nagai K."/>
            <person name="Kimura K."/>
            <person name="Makita H."/>
            <person name="Sekine M."/>
            <person name="Obayashi M."/>
            <person name="Nishi T."/>
            <person name="Shibahara T."/>
            <person name="Tanaka T."/>
            <person name="Ishii S."/>
            <person name="Yamamoto J."/>
            <person name="Saito K."/>
            <person name="Kawai Y."/>
            <person name="Isono Y."/>
            <person name="Nakamura Y."/>
            <person name="Nagahari K."/>
            <person name="Murakami K."/>
            <person name="Yasuda T."/>
            <person name="Iwayanagi T."/>
            <person name="Wagatsuma M."/>
            <person name="Shiratori A."/>
            <person name="Sudo H."/>
            <person name="Hosoiri T."/>
            <person name="Kaku Y."/>
            <person name="Kodaira H."/>
            <person name="Kondo H."/>
            <person name="Sugawara M."/>
            <person name="Takahashi M."/>
            <person name="Kanda K."/>
            <person name="Yokoi T."/>
            <person name="Furuya T."/>
            <person name="Kikkawa E."/>
            <person name="Omura Y."/>
            <person name="Abe K."/>
            <person name="Kamihara K."/>
            <person name="Katsuta N."/>
            <person name="Sato K."/>
            <person name="Tanikawa M."/>
            <person name="Yamazaki M."/>
            <person name="Ninomiya K."/>
            <person name="Ishibashi T."/>
            <person name="Yamashita H."/>
            <person name="Murakawa K."/>
            <person name="Fujimori K."/>
            <person name="Tanai H."/>
            <person name="Kimata M."/>
            <person name="Watanabe M."/>
            <person name="Hiraoka S."/>
            <person name="Chiba Y."/>
            <person name="Ishida S."/>
            <person name="Ono Y."/>
            <person name="Takiguchi S."/>
            <person name="Watanabe S."/>
            <person name="Yosida M."/>
            <person name="Hotuta T."/>
            <person name="Kusano J."/>
            <person name="Kanehori K."/>
            <person name="Takahashi-Fujii A."/>
            <person name="Hara H."/>
            <person name="Tanase T.-O."/>
            <person name="Nomura Y."/>
            <person name="Togiya S."/>
            <person name="Komai F."/>
            <person name="Hara R."/>
            <person name="Takeuchi K."/>
            <person name="Arita M."/>
            <person name="Imose N."/>
            <person name="Musashino K."/>
            <person name="Yuuki H."/>
            <person name="Oshima A."/>
            <person name="Sasaki N."/>
            <person name="Aotsuka S."/>
            <person name="Yoshikawa Y."/>
            <person name="Matsunawa H."/>
            <person name="Ichihara T."/>
            <person name="Shiohata N."/>
            <person name="Sano S."/>
            <person name="Moriya S."/>
            <person name="Momiyama H."/>
            <person name="Satoh N."/>
            <person name="Takami S."/>
            <person name="Terashima Y."/>
            <person name="Suzuki O."/>
            <person name="Nakagawa S."/>
            <person name="Senoh A."/>
            <person name="Mizoguchi H."/>
            <person name="Goto Y."/>
            <person name="Shimizu F."/>
            <person name="Wakebe H."/>
            <person name="Hishigaki H."/>
            <person name="Watanabe T."/>
            <person name="Sugiyama A."/>
            <person name="Takemoto M."/>
            <person name="Kawakami B."/>
            <person name="Yamazaki M."/>
            <person name="Watanabe K."/>
            <person name="Kumagai A."/>
            <person name="Itakura S."/>
            <person name="Fukuzumi Y."/>
            <person name="Fujimori Y."/>
            <person name="Komiyama M."/>
            <person name="Tashiro H."/>
            <person name="Tanigami A."/>
            <person name="Fujiwara T."/>
            <person name="Ono T."/>
            <person name="Yamada K."/>
            <person name="Fujii Y."/>
            <person name="Ozaki K."/>
            <person name="Hirao M."/>
            <person name="Ohmori Y."/>
            <person name="Kawabata A."/>
            <person name="Hikiji T."/>
            <person name="Kobatake N."/>
            <person name="Inagaki H."/>
            <person name="Ikema Y."/>
            <person name="Okamoto S."/>
            <person name="Okitani R."/>
            <person name="Kawakami T."/>
            <person name="Noguchi S."/>
            <person name="Itoh T."/>
            <person name="Shigeta K."/>
            <person name="Senba T."/>
            <person name="Matsumura K."/>
            <person name="Nakajima Y."/>
            <person name="Mizuno T."/>
            <person name="Morinaga M."/>
            <person name="Sasaki M."/>
            <person name="Togashi T."/>
            <person name="Oyama M."/>
            <person name="Hata H."/>
            <person name="Watanabe M."/>
            <person name="Komatsu T."/>
            <person name="Mizushima-Sugano J."/>
            <person name="Satoh T."/>
            <person name="Shirai Y."/>
            <person name="Takahashi Y."/>
            <person name="Nakagawa K."/>
            <person name="Okumura K."/>
            <person name="Nagase T."/>
            <person name="Nomura N."/>
            <person name="Kikuchi H."/>
            <person name="Masuho Y."/>
            <person name="Yamashita R."/>
            <person name="Nakai K."/>
            <person name="Yada T."/>
            <person name="Nakamura Y."/>
            <person name="Ohara O."/>
            <person name="Isogai T."/>
            <person name="Sugano S."/>
        </authorList>
    </citation>
    <scope>NUCLEOTIDE SEQUENCE [LARGE SCALE MRNA] (ISOFORM 2)</scope>
    <source>
        <tissue>Small intestine</tissue>
    </source>
</reference>
<reference key="2">
    <citation type="journal article" date="2006" name="Nature">
        <title>The finished DNA sequence of human chromosome 12.</title>
        <authorList>
            <person name="Scherer S.E."/>
            <person name="Muzny D.M."/>
            <person name="Buhay C.J."/>
            <person name="Chen R."/>
            <person name="Cree A."/>
            <person name="Ding Y."/>
            <person name="Dugan-Rocha S."/>
            <person name="Gill R."/>
            <person name="Gunaratne P."/>
            <person name="Harris R.A."/>
            <person name="Hawes A.C."/>
            <person name="Hernandez J."/>
            <person name="Hodgson A.V."/>
            <person name="Hume J."/>
            <person name="Jackson A."/>
            <person name="Khan Z.M."/>
            <person name="Kovar-Smith C."/>
            <person name="Lewis L.R."/>
            <person name="Lozado R.J."/>
            <person name="Metzker M.L."/>
            <person name="Milosavljevic A."/>
            <person name="Miner G.R."/>
            <person name="Montgomery K.T."/>
            <person name="Morgan M.B."/>
            <person name="Nazareth L.V."/>
            <person name="Scott G."/>
            <person name="Sodergren E."/>
            <person name="Song X.-Z."/>
            <person name="Steffen D."/>
            <person name="Lovering R.C."/>
            <person name="Wheeler D.A."/>
            <person name="Worley K.C."/>
            <person name="Yuan Y."/>
            <person name="Zhang Z."/>
            <person name="Adams C.Q."/>
            <person name="Ansari-Lari M.A."/>
            <person name="Ayele M."/>
            <person name="Brown M.J."/>
            <person name="Chen G."/>
            <person name="Chen Z."/>
            <person name="Clerc-Blankenburg K.P."/>
            <person name="Davis C."/>
            <person name="Delgado O."/>
            <person name="Dinh H.H."/>
            <person name="Draper H."/>
            <person name="Gonzalez-Garay M.L."/>
            <person name="Havlak P."/>
            <person name="Jackson L.R."/>
            <person name="Jacob L.S."/>
            <person name="Kelly S.H."/>
            <person name="Li L."/>
            <person name="Li Z."/>
            <person name="Liu J."/>
            <person name="Liu W."/>
            <person name="Lu J."/>
            <person name="Maheshwari M."/>
            <person name="Nguyen B.-V."/>
            <person name="Okwuonu G.O."/>
            <person name="Pasternak S."/>
            <person name="Perez L.M."/>
            <person name="Plopper F.J.H."/>
            <person name="Santibanez J."/>
            <person name="Shen H."/>
            <person name="Tabor P.E."/>
            <person name="Verduzco D."/>
            <person name="Waldron L."/>
            <person name="Wang Q."/>
            <person name="Williams G.A."/>
            <person name="Zhang J."/>
            <person name="Zhou J."/>
            <person name="Allen C.C."/>
            <person name="Amin A.G."/>
            <person name="Anyalebechi V."/>
            <person name="Bailey M."/>
            <person name="Barbaria J.A."/>
            <person name="Bimage K.E."/>
            <person name="Bryant N.P."/>
            <person name="Burch P.E."/>
            <person name="Burkett C.E."/>
            <person name="Burrell K.L."/>
            <person name="Calderon E."/>
            <person name="Cardenas V."/>
            <person name="Carter K."/>
            <person name="Casias K."/>
            <person name="Cavazos I."/>
            <person name="Cavazos S.R."/>
            <person name="Ceasar H."/>
            <person name="Chacko J."/>
            <person name="Chan S.N."/>
            <person name="Chavez D."/>
            <person name="Christopoulos C."/>
            <person name="Chu J."/>
            <person name="Cockrell R."/>
            <person name="Cox C.D."/>
            <person name="Dang M."/>
            <person name="Dathorne S.R."/>
            <person name="David R."/>
            <person name="Davis C.M."/>
            <person name="Davy-Carroll L."/>
            <person name="Deshazo D.R."/>
            <person name="Donlin J.E."/>
            <person name="D'Souza L."/>
            <person name="Eaves K.A."/>
            <person name="Egan A."/>
            <person name="Emery-Cohen A.J."/>
            <person name="Escotto M."/>
            <person name="Flagg N."/>
            <person name="Forbes L.D."/>
            <person name="Gabisi A.M."/>
            <person name="Garza M."/>
            <person name="Hamilton C."/>
            <person name="Henderson N."/>
            <person name="Hernandez O."/>
            <person name="Hines S."/>
            <person name="Hogues M.E."/>
            <person name="Huang M."/>
            <person name="Idlebird D.G."/>
            <person name="Johnson R."/>
            <person name="Jolivet A."/>
            <person name="Jones S."/>
            <person name="Kagan R."/>
            <person name="King L.M."/>
            <person name="Leal B."/>
            <person name="Lebow H."/>
            <person name="Lee S."/>
            <person name="LeVan J.M."/>
            <person name="Lewis L.C."/>
            <person name="London P."/>
            <person name="Lorensuhewa L.M."/>
            <person name="Loulseged H."/>
            <person name="Lovett D.A."/>
            <person name="Lucier A."/>
            <person name="Lucier R.L."/>
            <person name="Ma J."/>
            <person name="Madu R.C."/>
            <person name="Mapua P."/>
            <person name="Martindale A.D."/>
            <person name="Martinez E."/>
            <person name="Massey E."/>
            <person name="Mawhiney S."/>
            <person name="Meador M.G."/>
            <person name="Mendez S."/>
            <person name="Mercado C."/>
            <person name="Mercado I.C."/>
            <person name="Merritt C.E."/>
            <person name="Miner Z.L."/>
            <person name="Minja E."/>
            <person name="Mitchell T."/>
            <person name="Mohabbat F."/>
            <person name="Mohabbat K."/>
            <person name="Montgomery B."/>
            <person name="Moore N."/>
            <person name="Morris S."/>
            <person name="Munidasa M."/>
            <person name="Ngo R.N."/>
            <person name="Nguyen N.B."/>
            <person name="Nickerson E."/>
            <person name="Nwaokelemeh O.O."/>
            <person name="Nwokenkwo S."/>
            <person name="Obregon M."/>
            <person name="Oguh M."/>
            <person name="Oragunye N."/>
            <person name="Oviedo R.J."/>
            <person name="Parish B.J."/>
            <person name="Parker D.N."/>
            <person name="Parrish J."/>
            <person name="Parks K.L."/>
            <person name="Paul H.A."/>
            <person name="Payton B.A."/>
            <person name="Perez A."/>
            <person name="Perrin W."/>
            <person name="Pickens A."/>
            <person name="Primus E.L."/>
            <person name="Pu L.-L."/>
            <person name="Puazo M."/>
            <person name="Quiles M.M."/>
            <person name="Quiroz J.B."/>
            <person name="Rabata D."/>
            <person name="Reeves K."/>
            <person name="Ruiz S.J."/>
            <person name="Shao H."/>
            <person name="Sisson I."/>
            <person name="Sonaike T."/>
            <person name="Sorelle R.P."/>
            <person name="Sutton A.E."/>
            <person name="Svatek A.F."/>
            <person name="Svetz L.A."/>
            <person name="Tamerisa K.S."/>
            <person name="Taylor T.R."/>
            <person name="Teague B."/>
            <person name="Thomas N."/>
            <person name="Thorn R.D."/>
            <person name="Trejos Z.Y."/>
            <person name="Trevino B.K."/>
            <person name="Ukegbu O.N."/>
            <person name="Urban J.B."/>
            <person name="Vasquez L.I."/>
            <person name="Vera V.A."/>
            <person name="Villasana D.M."/>
            <person name="Wang L."/>
            <person name="Ward-Moore S."/>
            <person name="Warren J.T."/>
            <person name="Wei X."/>
            <person name="White F."/>
            <person name="Williamson A.L."/>
            <person name="Wleczyk R."/>
            <person name="Wooden H.S."/>
            <person name="Wooden S.H."/>
            <person name="Yen J."/>
            <person name="Yoon L."/>
            <person name="Yoon V."/>
            <person name="Zorrilla S.E."/>
            <person name="Nelson D."/>
            <person name="Kucherlapati R."/>
            <person name="Weinstock G."/>
            <person name="Gibbs R.A."/>
        </authorList>
    </citation>
    <scope>NUCLEOTIDE SEQUENCE [LARGE SCALE GENOMIC DNA]</scope>
</reference>
<reference key="3">
    <citation type="submission" date="2005-07" db="EMBL/GenBank/DDBJ databases">
        <authorList>
            <person name="Mural R.J."/>
            <person name="Istrail S."/>
            <person name="Sutton G."/>
            <person name="Florea L."/>
            <person name="Halpern A.L."/>
            <person name="Mobarry C.M."/>
            <person name="Lippert R."/>
            <person name="Walenz B."/>
            <person name="Shatkay H."/>
            <person name="Dew I."/>
            <person name="Miller J.R."/>
            <person name="Flanigan M.J."/>
            <person name="Edwards N.J."/>
            <person name="Bolanos R."/>
            <person name="Fasulo D."/>
            <person name="Halldorsson B.V."/>
            <person name="Hannenhalli S."/>
            <person name="Turner R."/>
            <person name="Yooseph S."/>
            <person name="Lu F."/>
            <person name="Nusskern D.R."/>
            <person name="Shue B.C."/>
            <person name="Zheng X.H."/>
            <person name="Zhong F."/>
            <person name="Delcher A.L."/>
            <person name="Huson D.H."/>
            <person name="Kravitz S.A."/>
            <person name="Mouchard L."/>
            <person name="Reinert K."/>
            <person name="Remington K.A."/>
            <person name="Clark A.G."/>
            <person name="Waterman M.S."/>
            <person name="Eichler E.E."/>
            <person name="Adams M.D."/>
            <person name="Hunkapiller M.W."/>
            <person name="Myers E.W."/>
            <person name="Venter J.C."/>
        </authorList>
    </citation>
    <scope>NUCLEOTIDE SEQUENCE [LARGE SCALE GENOMIC DNA]</scope>
</reference>
<reference key="4">
    <citation type="journal article" date="2004" name="Genome Res.">
        <title>The status, quality, and expansion of the NIH full-length cDNA project: the Mammalian Gene Collection (MGC).</title>
        <authorList>
            <consortium name="The MGC Project Team"/>
        </authorList>
    </citation>
    <scope>NUCLEOTIDE SEQUENCE [LARGE SCALE MRNA] (ISOFORM 1)</scope>
    <source>
        <tissue>Eye</tissue>
    </source>
</reference>
<reference key="5">
    <citation type="journal article" date="2006" name="J. Biol. Chem.">
        <title>Necessary role for the Lag1p motif in (dihydro)ceramide synthase activity.</title>
        <authorList>
            <person name="Spassieva S."/>
            <person name="Seo J.G."/>
            <person name="Jiang J.C."/>
            <person name="Bielawski J."/>
            <person name="Alvarez-Vasquez F."/>
            <person name="Jazwinski S.M."/>
            <person name="Hannun Y.A."/>
            <person name="Obeid L.M."/>
        </authorList>
    </citation>
    <scope>FUNCTION</scope>
    <scope>CATALYTIC ACTIVITY</scope>
    <scope>ACTIVITY REGULATION</scope>
    <scope>PATHWAY</scope>
    <scope>MUTAGENESIS OF HIS-220; SER-231 AND LEU-254</scope>
</reference>
<reference key="6">
    <citation type="journal article" date="2008" name="J. Lipid Res.">
        <title>2-Hydroxy-ceramide synthesis by ceramide synthase family: enzymatic basis for the preference of FA chain length.</title>
        <authorList>
            <person name="Mizutani Y."/>
            <person name="Kihara A."/>
            <person name="Chiba H."/>
            <person name="Tojo H."/>
            <person name="Igarashi Y."/>
        </authorList>
    </citation>
    <scope>FUNCTION</scope>
    <scope>CATALYTIC ACTIVITY</scope>
    <scope>PATHWAY</scope>
</reference>
<reference key="7">
    <citation type="journal article" date="2012" name="J. Biol. Chem.">
        <title>Acyl chain specificity of ceramide synthases is determined within a region of 150 residues in the Tram-Lag-CLN8 (TLC) domain.</title>
        <authorList>
            <person name="Tidhar R."/>
            <person name="Ben-Dor S."/>
            <person name="Wang E."/>
            <person name="Kelly S."/>
            <person name="Merrill A.H. Jr."/>
            <person name="Futerman A.H."/>
        </authorList>
    </citation>
    <scope>FUNCTION</scope>
    <scope>CATALYTIC ACTIVITY</scope>
    <scope>PATHWAY</scope>
</reference>
<reference key="8">
    <citation type="journal article" date="2012" name="J. Lipid Res.">
        <title>A fluorescent assay for ceramide synthase activity.</title>
        <authorList>
            <person name="Kim H.J."/>
            <person name="Qiao Q."/>
            <person name="Toop H.D."/>
            <person name="Morris J.C."/>
            <person name="Don A.S."/>
        </authorList>
    </citation>
    <scope>FUNCTION</scope>
    <scope>CATALYTIC ACTIVITY</scope>
    <scope>PATHWAY</scope>
</reference>
<reference key="9">
    <citation type="journal article" date="2013" name="J. Biol. Chem.">
        <title>Myristate-derived d16:0 sphingolipids constitute a cardiac sphingolipid pool with distinct synthetic routes and functional properties.</title>
        <authorList>
            <person name="Russo S.B."/>
            <person name="Tidhar R."/>
            <person name="Futerman A.H."/>
            <person name="Cowart L.A."/>
        </authorList>
    </citation>
    <scope>FUNCTION</scope>
    <scope>CATALYTIC ACTIVITY</scope>
    <scope>PATHWAY</scope>
</reference>
<reference key="10">
    <citation type="journal article" date="2016" name="J. Biol. Chem.">
        <title>Enzyme activities of the ceramide synthases CERS2-6 are regulated by phosphorylation in the C-terminal region.</title>
        <authorList>
            <person name="Sassa T."/>
            <person name="Hirayama T."/>
            <person name="Kihara A."/>
        </authorList>
    </citation>
    <scope>FUNCTION</scope>
    <scope>CATALYTIC ACTIVITY</scope>
    <scope>PATHWAY</scope>
    <scope>PHOSPHORYLATION</scope>
    <scope>GLYCOSYLATION</scope>
    <scope>TOPOLOGY</scope>
    <scope>MUTAGENESIS OF 350-SER--SER-356</scope>
</reference>
<reference key="11">
    <citation type="journal article" date="2018" name="J. Biol. Chem.">
        <title>Eleven residues determine the acyl chain specificity of ceramide synthases.</title>
        <authorList>
            <person name="Tidhar R."/>
            <person name="Zelnik I.D."/>
            <person name="Volpert G."/>
            <person name="Ben-Dor S."/>
            <person name="Kelly S."/>
            <person name="Merrill A.H. Jr."/>
            <person name="Futerman A.H."/>
        </authorList>
    </citation>
    <scope>FUNCTION</scope>
    <scope>CATALYTIC ACTIVITY</scope>
    <scope>PATHWAY</scope>
    <scope>TOPOLOGY</scope>
    <scope>DOMAIN</scope>
    <scope>GLYCOSYLATION AT ASN-26</scope>
    <scope>MUTAGENESIS OF ASN-26; 153-CYS--SER-165 AND 299-GLU--SER-309</scope>
</reference>
<reference key="12">
    <citation type="journal article" date="2020" name="FASEB J.">
        <title>Biosynthesis of the anti-lipid-microdomain sphingoid base 4,14-sphingadiene by the ceramide desaturase FADS3.</title>
        <authorList>
            <person name="Jojima K."/>
            <person name="Edagawa M."/>
            <person name="Sawai M."/>
            <person name="Ohno Y."/>
            <person name="Kihara A."/>
        </authorList>
    </citation>
    <scope>FUNCTION</scope>
    <scope>CATALYTIC ACTIVITY</scope>
</reference>
<reference key="13">
    <citation type="journal article" date="2024" name="Nat. Metab.">
        <title>PAQR4 regulates adipocyte function and systemic metabolic health by mediating ceramide levels.</title>
        <authorList>
            <person name="Zhu Q."/>
            <person name="Chen S."/>
            <person name="Funcke J.B."/>
            <person name="Straub L.G."/>
            <person name="Lin Q."/>
            <person name="Zhao S."/>
            <person name="Joung C."/>
            <person name="Zhang Z."/>
            <person name="Kim D.S."/>
            <person name="Li N."/>
            <person name="Gliniak C.M."/>
            <person name="Lee C."/>
            <person name="Cebrian-Serrano A."/>
            <person name="Pedersen L."/>
            <person name="Halberg N."/>
            <person name="Gordillo R."/>
            <person name="Kusminski C.M."/>
            <person name="Scherer P.E."/>
        </authorList>
    </citation>
    <scope>INTERACTION WITH PAQR4</scope>
</reference>
<sequence>MATAAQGPLSLLWGWLWSERFWLPENVSWADLEGPADGYGYPRGRHILSVFPLAAGIFFVRLLFERFIAKPCALCIGIEDSGPYQAQPNAILEKVFISITKYPDKKRLEGLSKQLDWNVRKIQCWFRHRRNQDKPPTLTKFCESMWRFTFYLCIFCYGIRFLWSSPWFWDIRQCWHNYPFQPLSSGLYHYYIMELAFYWSLMFSQFTDIKRKDFLIMFVHHLVTIGLISFSYINNMVRVGTLIMCLHDVSDFLLEAAKLANYAKYQRLCDTLFVIFSAVFMVTRLGIYPFWILNTTLFESWEIIGPYASWWLLNGLLLTLQLLHVIWSYLIARIALKALIRGKVSKDDRSDVESSSEEEDVTTCTKSPCDSSSSNGANRVNGHMGGSYWAEE</sequence>
<proteinExistence type="evidence at protein level"/>
<protein>
    <recommendedName>
        <fullName evidence="15">Ceramide synthase 5</fullName>
        <shortName evidence="15">CerS5</shortName>
    </recommendedName>
    <alternativeName>
        <fullName evidence="1">LAG1 longevity assurance homolog 5</fullName>
    </alternativeName>
    <alternativeName>
        <fullName evidence="15">Sphingoid base N-palmitoyltransferase CERS5</fullName>
        <ecNumber evidence="5 6 7 8 9 10 11">2.3.1.291</ecNumber>
    </alternativeName>
    <alternativeName>
        <fullName evidence="15">Sphingosine N-acyltransferase CERS5</fullName>
        <ecNumber evidence="1">2.3.1.24</ecNumber>
    </alternativeName>
</protein>
<keyword id="KW-0025">Alternative splicing</keyword>
<keyword id="KW-0256">Endoplasmic reticulum</keyword>
<keyword id="KW-0325">Glycoprotein</keyword>
<keyword id="KW-0444">Lipid biosynthesis</keyword>
<keyword id="KW-0443">Lipid metabolism</keyword>
<keyword id="KW-0472">Membrane</keyword>
<keyword id="KW-0597">Phosphoprotein</keyword>
<keyword id="KW-1267">Proteomics identification</keyword>
<keyword id="KW-1185">Reference proteome</keyword>
<keyword id="KW-0746">Sphingolipid metabolism</keyword>
<keyword id="KW-0808">Transferase</keyword>
<keyword id="KW-0812">Transmembrane</keyword>
<keyword id="KW-1133">Transmembrane helix</keyword>
<dbReference type="EC" id="2.3.1.291" evidence="5 6 7 8 9 10 11"/>
<dbReference type="EC" id="2.3.1.24" evidence="1"/>
<dbReference type="EMBL" id="AK300937">
    <property type="protein sequence ID" value="BAG62566.1"/>
    <property type="molecule type" value="mRNA"/>
</dbReference>
<dbReference type="EMBL" id="AC074032">
    <property type="status" value="NOT_ANNOTATED_CDS"/>
    <property type="molecule type" value="Genomic_DNA"/>
</dbReference>
<dbReference type="EMBL" id="AC139016">
    <property type="status" value="NOT_ANNOTATED_CDS"/>
    <property type="molecule type" value="Genomic_DNA"/>
</dbReference>
<dbReference type="EMBL" id="CH471111">
    <property type="protein sequence ID" value="EAW58133.1"/>
    <property type="molecule type" value="Genomic_DNA"/>
</dbReference>
<dbReference type="EMBL" id="BC032565">
    <property type="protein sequence ID" value="AAH32565.1"/>
    <property type="molecule type" value="mRNA"/>
</dbReference>
<dbReference type="CCDS" id="CCDS61120.1">
    <molecule id="Q8N5B7-2"/>
</dbReference>
<dbReference type="CCDS" id="CCDS8801.1">
    <molecule id="Q8N5B7-1"/>
</dbReference>
<dbReference type="RefSeq" id="NP_001268660.1">
    <molecule id="Q8N5B7-2"/>
    <property type="nucleotide sequence ID" value="NM_001281731.2"/>
</dbReference>
<dbReference type="RefSeq" id="NP_671723.1">
    <molecule id="Q8N5B7-1"/>
    <property type="nucleotide sequence ID" value="NM_147190.5"/>
</dbReference>
<dbReference type="SMR" id="Q8N5B7"/>
<dbReference type="BioGRID" id="124788">
    <property type="interactions" value="37"/>
</dbReference>
<dbReference type="FunCoup" id="Q8N5B7">
    <property type="interactions" value="2318"/>
</dbReference>
<dbReference type="IntAct" id="Q8N5B7">
    <property type="interactions" value="22"/>
</dbReference>
<dbReference type="STRING" id="9606.ENSP00000325485"/>
<dbReference type="ChEMBL" id="CHEMBL5291585"/>
<dbReference type="SwissLipids" id="SLP:000000261"/>
<dbReference type="GlyCosmos" id="Q8N5B7">
    <property type="glycosylation" value="1 site, No reported glycans"/>
</dbReference>
<dbReference type="GlyGen" id="Q8N5B7">
    <property type="glycosylation" value="2 sites, 7 N-linked glycans (1 site), 1 O-linked glycan (1 site)"/>
</dbReference>
<dbReference type="iPTMnet" id="Q8N5B7"/>
<dbReference type="PhosphoSitePlus" id="Q8N5B7"/>
<dbReference type="SwissPalm" id="Q8N5B7"/>
<dbReference type="BioMuta" id="CERS5"/>
<dbReference type="DMDM" id="51316484"/>
<dbReference type="jPOST" id="Q8N5B7"/>
<dbReference type="MassIVE" id="Q8N5B7"/>
<dbReference type="PaxDb" id="9606-ENSP00000325485"/>
<dbReference type="PeptideAtlas" id="Q8N5B7"/>
<dbReference type="ProteomicsDB" id="5243"/>
<dbReference type="ProteomicsDB" id="72028">
    <molecule id="Q8N5B7-1"/>
</dbReference>
<dbReference type="Pumba" id="Q8N5B7"/>
<dbReference type="Antibodypedia" id="14183">
    <property type="antibodies" value="212 antibodies from 30 providers"/>
</dbReference>
<dbReference type="DNASU" id="91012"/>
<dbReference type="Ensembl" id="ENST00000317551.12">
    <molecule id="Q8N5B7-1"/>
    <property type="protein sequence ID" value="ENSP00000325485.6"/>
    <property type="gene ID" value="ENSG00000139624.14"/>
</dbReference>
<dbReference type="Ensembl" id="ENST00000422340.6">
    <molecule id="Q8N5B7-2"/>
    <property type="protein sequence ID" value="ENSP00000389050.2"/>
    <property type="gene ID" value="ENSG00000139624.14"/>
</dbReference>
<dbReference type="GeneID" id="91012"/>
<dbReference type="KEGG" id="hsa:91012"/>
<dbReference type="MANE-Select" id="ENST00000317551.12">
    <property type="protein sequence ID" value="ENSP00000325485.6"/>
    <property type="RefSeq nucleotide sequence ID" value="NM_147190.5"/>
    <property type="RefSeq protein sequence ID" value="NP_671723.1"/>
</dbReference>
<dbReference type="UCSC" id="uc001rwd.6">
    <molecule id="Q8N5B7-1"/>
    <property type="organism name" value="human"/>
</dbReference>
<dbReference type="AGR" id="HGNC:23749"/>
<dbReference type="CTD" id="91012"/>
<dbReference type="DisGeNET" id="91012"/>
<dbReference type="GeneCards" id="CERS5"/>
<dbReference type="HGNC" id="HGNC:23749">
    <property type="gene designation" value="CERS5"/>
</dbReference>
<dbReference type="HPA" id="ENSG00000139624">
    <property type="expression patterns" value="Low tissue specificity"/>
</dbReference>
<dbReference type="MIM" id="615335">
    <property type="type" value="gene"/>
</dbReference>
<dbReference type="neXtProt" id="NX_Q8N5B7"/>
<dbReference type="OpenTargets" id="ENSG00000139624"/>
<dbReference type="PharmGKB" id="PA134882694"/>
<dbReference type="VEuPathDB" id="HostDB:ENSG00000139624"/>
<dbReference type="eggNOG" id="KOG1607">
    <property type="taxonomic scope" value="Eukaryota"/>
</dbReference>
<dbReference type="GeneTree" id="ENSGT01030000234515"/>
<dbReference type="HOGENOM" id="CLU_028277_1_2_1"/>
<dbReference type="InParanoid" id="Q8N5B7"/>
<dbReference type="OMA" id="FTESTWR"/>
<dbReference type="OrthoDB" id="537032at2759"/>
<dbReference type="PAN-GO" id="Q8N5B7">
    <property type="GO annotations" value="3 GO annotations based on evolutionary models"/>
</dbReference>
<dbReference type="PhylomeDB" id="Q8N5B7"/>
<dbReference type="TreeFam" id="TF314319"/>
<dbReference type="BioCyc" id="MetaCyc:ENSG00000139624-MONOMER"/>
<dbReference type="BRENDA" id="2.3.1.24">
    <property type="organism ID" value="2681"/>
</dbReference>
<dbReference type="BRENDA" id="2.3.1.291">
    <property type="organism ID" value="2681"/>
</dbReference>
<dbReference type="PathwayCommons" id="Q8N5B7"/>
<dbReference type="Reactome" id="R-HSA-1660661">
    <property type="pathway name" value="Sphingolipid de novo biosynthesis"/>
</dbReference>
<dbReference type="SignaLink" id="Q8N5B7"/>
<dbReference type="SIGNOR" id="Q8N5B7"/>
<dbReference type="UniPathway" id="UPA00222"/>
<dbReference type="BioGRID-ORCS" id="91012">
    <property type="hits" value="29 hits in 1182 CRISPR screens"/>
</dbReference>
<dbReference type="ChiTaRS" id="CERS5">
    <property type="organism name" value="human"/>
</dbReference>
<dbReference type="GenomeRNAi" id="91012"/>
<dbReference type="Pharos" id="Q8N5B7">
    <property type="development level" value="Tbio"/>
</dbReference>
<dbReference type="PRO" id="PR:Q8N5B7"/>
<dbReference type="Proteomes" id="UP000005640">
    <property type="component" value="Chromosome 12"/>
</dbReference>
<dbReference type="RNAct" id="Q8N5B7">
    <property type="molecule type" value="protein"/>
</dbReference>
<dbReference type="Bgee" id="ENSG00000139624">
    <property type="expression patterns" value="Expressed in cerebellar hemisphere and 177 other cell types or tissues"/>
</dbReference>
<dbReference type="ExpressionAtlas" id="Q8N5B7">
    <property type="expression patterns" value="baseline and differential"/>
</dbReference>
<dbReference type="GO" id="GO:0005789">
    <property type="term" value="C:endoplasmic reticulum membrane"/>
    <property type="evidence" value="ECO:0000304"/>
    <property type="project" value="Reactome"/>
</dbReference>
<dbReference type="GO" id="GO:0003677">
    <property type="term" value="F:DNA binding"/>
    <property type="evidence" value="ECO:0007669"/>
    <property type="project" value="InterPro"/>
</dbReference>
<dbReference type="GO" id="GO:0050291">
    <property type="term" value="F:sphingosine N-acyltransferase activity"/>
    <property type="evidence" value="ECO:0000314"/>
    <property type="project" value="UniProtKB"/>
</dbReference>
<dbReference type="GO" id="GO:0046513">
    <property type="term" value="P:ceramide biosynthetic process"/>
    <property type="evidence" value="ECO:0000314"/>
    <property type="project" value="UniProtKB"/>
</dbReference>
<dbReference type="GO" id="GO:0014003">
    <property type="term" value="P:oligodendrocyte development"/>
    <property type="evidence" value="ECO:0007669"/>
    <property type="project" value="Ensembl"/>
</dbReference>
<dbReference type="GO" id="GO:0030148">
    <property type="term" value="P:sphingolipid biosynthetic process"/>
    <property type="evidence" value="ECO:0000304"/>
    <property type="project" value="Reactome"/>
</dbReference>
<dbReference type="CDD" id="cd00086">
    <property type="entry name" value="homeodomain"/>
    <property type="match status" value="1"/>
</dbReference>
<dbReference type="FunFam" id="1.10.10.60:FF:000020">
    <property type="entry name" value="Ceramide synthase 5"/>
    <property type="match status" value="1"/>
</dbReference>
<dbReference type="Gene3D" id="1.10.10.60">
    <property type="entry name" value="Homeodomain-like"/>
    <property type="match status" value="1"/>
</dbReference>
<dbReference type="InterPro" id="IPR001356">
    <property type="entry name" value="HD"/>
</dbReference>
<dbReference type="InterPro" id="IPR009057">
    <property type="entry name" value="Homeodomain-like_sf"/>
</dbReference>
<dbReference type="InterPro" id="IPR016439">
    <property type="entry name" value="Lag1/Lac1-like"/>
</dbReference>
<dbReference type="InterPro" id="IPR006634">
    <property type="entry name" value="TLC-dom"/>
</dbReference>
<dbReference type="PANTHER" id="PTHR12560:SF8">
    <property type="entry name" value="CERAMIDE SYNTHASE 5"/>
    <property type="match status" value="1"/>
</dbReference>
<dbReference type="PANTHER" id="PTHR12560">
    <property type="entry name" value="LONGEVITY ASSURANCE FACTOR 1 LAG1"/>
    <property type="match status" value="1"/>
</dbReference>
<dbReference type="Pfam" id="PF00046">
    <property type="entry name" value="Homeodomain"/>
    <property type="match status" value="1"/>
</dbReference>
<dbReference type="Pfam" id="PF03798">
    <property type="entry name" value="TRAM_LAG1_CLN8"/>
    <property type="match status" value="1"/>
</dbReference>
<dbReference type="PIRSF" id="PIRSF005225">
    <property type="entry name" value="LAG1_LAC1"/>
    <property type="match status" value="1"/>
</dbReference>
<dbReference type="SMART" id="SM00724">
    <property type="entry name" value="TLC"/>
    <property type="match status" value="1"/>
</dbReference>
<dbReference type="SUPFAM" id="SSF46689">
    <property type="entry name" value="Homeodomain-like"/>
    <property type="match status" value="1"/>
</dbReference>
<dbReference type="PROSITE" id="PS50922">
    <property type="entry name" value="TLC"/>
    <property type="match status" value="1"/>
</dbReference>
<accession>Q8N5B7</accession>
<accession>B4DV54</accession>
<feature type="chain" id="PRO_0000185514" description="Ceramide synthase 5">
    <location>
        <begin position="1"/>
        <end position="392"/>
    </location>
</feature>
<feature type="topological domain" description="Lumenal" evidence="17">
    <location>
        <begin position="1"/>
        <end position="46"/>
    </location>
</feature>
<feature type="transmembrane region" description="Helical" evidence="2">
    <location>
        <begin position="47"/>
        <end position="67"/>
    </location>
</feature>
<feature type="transmembrane region" description="Helical" evidence="2">
    <location>
        <begin position="148"/>
        <end position="168"/>
    </location>
</feature>
<feature type="transmembrane region" description="Helical" evidence="2">
    <location>
        <begin position="183"/>
        <end position="203"/>
    </location>
</feature>
<feature type="transmembrane region" description="Helical" evidence="2">
    <location>
        <begin position="214"/>
        <end position="234"/>
    </location>
</feature>
<feature type="transmembrane region" description="Helical" evidence="2">
    <location>
        <begin position="272"/>
        <end position="292"/>
    </location>
</feature>
<feature type="transmembrane region" description="Helical" evidence="2">
    <location>
        <begin position="311"/>
        <end position="331"/>
    </location>
</feature>
<feature type="topological domain" description="Cytoplasmic" evidence="16">
    <location>
        <begin position="332"/>
        <end position="392"/>
    </location>
</feature>
<feature type="domain" description="TLC" evidence="3">
    <location>
        <begin position="139"/>
        <end position="340"/>
    </location>
</feature>
<feature type="region of interest" description="Homeobox-like" evidence="15">
    <location>
        <begin position="75"/>
        <end position="136"/>
    </location>
</feature>
<feature type="region of interest" description="Disordered" evidence="4">
    <location>
        <begin position="349"/>
        <end position="392"/>
    </location>
</feature>
<feature type="short sequence motif" description="Last loop motif" evidence="11">
    <location>
        <begin position="299"/>
        <end position="309"/>
    </location>
</feature>
<feature type="compositionally biased region" description="Polar residues" evidence="4">
    <location>
        <begin position="362"/>
        <end position="378"/>
    </location>
</feature>
<feature type="glycosylation site" description="N-linked (GlcNAc...) asparagine" evidence="11">
    <location>
        <position position="26"/>
    </location>
</feature>
<feature type="splice variant" id="VSP_054572" description="In isoform 2." evidence="14">
    <original>MATAAQGPLSLLWGWLWSERFWLPENVSWADLEGPADGYGYPRGRHILSVFPLAAGIFFVRLLFE</original>
    <variation>MMKPRPK</variation>
    <location>
        <begin position="1"/>
        <end position="65"/>
    </location>
</feature>
<feature type="sequence variant" id="VAR_019558" description="In dbSNP:rs7302981.">
    <original>C</original>
    <variation>R</variation>
    <location>
        <position position="75"/>
    </location>
</feature>
<feature type="mutagenesis site" description="Reduced N-glycosylation." evidence="11">
    <original>N</original>
    <variation>Q</variation>
    <location>
        <position position="26"/>
    </location>
</feature>
<feature type="mutagenesis site" description="Does not affect specificity toward acyl donor." evidence="11">
    <original>CIFCYGIRFLWSS</original>
    <variation>IAGMAVIVD</variation>
    <location>
        <begin position="153"/>
        <end position="165"/>
    </location>
</feature>
<feature type="mutagenesis site" description="Strongly decreased ceramide synthase activity." evidence="5">
    <original>H</original>
    <variation>D</variation>
    <location>
        <position position="220"/>
    </location>
</feature>
<feature type="mutagenesis site" description="Does not affect ceramide synthase activity." evidence="5">
    <original>S</original>
    <variation>A</variation>
    <location>
        <position position="231"/>
    </location>
</feature>
<feature type="mutagenesis site" description="Strongly decreased ceramide synthase activity." evidence="5">
    <original>L</original>
    <variation>E</variation>
    <location>
        <position position="254"/>
    </location>
</feature>
<feature type="mutagenesis site" description="Does not affect ceramide synthase activity." evidence="5">
    <original>L</original>
    <variation>M</variation>
    <location>
        <position position="254"/>
    </location>
</feature>
<feature type="mutagenesis site" description="Altered specificity toward acyl donor; generates C22-C24 ceramides instead of C16-ceramide." evidence="11">
    <original>ESWEIIGPYAS</original>
    <variation>YPLELYPAFFG</variation>
    <location>
        <begin position="299"/>
        <end position="309"/>
    </location>
</feature>
<feature type="mutagenesis site" description="Decreased phosphorylation." evidence="10">
    <original>SDVESSS</original>
    <variation>ADVEAAA</variation>
    <location>
        <begin position="350"/>
        <end position="356"/>
    </location>
</feature>
<comment type="function">
    <text evidence="1 5 6 7 8 9 10 11 12">Ceramide synthase that catalyzes the transfer of the acyl chain from acyl-CoA to a sphingoid base, with high selectivity toward palmitoyl-CoA (hexadecanoyl-CoA; C16:0-CoA) (PubMed:16951403, PubMed:18541923, PubMed:22144673, PubMed:22661289, PubMed:23530041, PubMed:26887952, PubMed:29632068, PubMed:31916624). Can use other acyl donors, but with less efficiency (By similarity). N-acylates sphinganine and sphingosine bases to form dihydroceramides and ceramides in de novo synthesis and salvage pathways, respectively (PubMed:31916624). Plays a role in de novo ceramide synthesis and surfactant homeostasis in pulmonary epithelia (By similarity).</text>
</comment>
<comment type="catalytic activity">
    <reaction evidence="5 6 7 8 9 10 11 12">
        <text>a sphingoid base + hexadecanoyl-CoA = an N-hexadecanoyl-sphingoid base + CoA + H(+)</text>
        <dbReference type="Rhea" id="RHEA:61472"/>
        <dbReference type="ChEBI" id="CHEBI:15378"/>
        <dbReference type="ChEBI" id="CHEBI:57287"/>
        <dbReference type="ChEBI" id="CHEBI:57379"/>
        <dbReference type="ChEBI" id="CHEBI:84410"/>
        <dbReference type="ChEBI" id="CHEBI:144703"/>
        <dbReference type="EC" id="2.3.1.291"/>
    </reaction>
    <physiologicalReaction direction="left-to-right" evidence="5 6 7 8 9 10 11 12">
        <dbReference type="Rhea" id="RHEA:61473"/>
    </physiologicalReaction>
</comment>
<comment type="catalytic activity">
    <reaction evidence="5 6 7 8 9 10 11 12">
        <text>sphinganine + hexadecanoyl-CoA = N-hexadecanoylsphinganine + CoA + H(+)</text>
        <dbReference type="Rhea" id="RHEA:36539"/>
        <dbReference type="ChEBI" id="CHEBI:15378"/>
        <dbReference type="ChEBI" id="CHEBI:57287"/>
        <dbReference type="ChEBI" id="CHEBI:57379"/>
        <dbReference type="ChEBI" id="CHEBI:57817"/>
        <dbReference type="ChEBI" id="CHEBI:67042"/>
    </reaction>
    <physiologicalReaction direction="left-to-right" evidence="5 6 7 8 9 10 11 12">
        <dbReference type="Rhea" id="RHEA:36540"/>
    </physiologicalReaction>
</comment>
<comment type="catalytic activity">
    <reaction evidence="9">
        <text>hexadecasphinganine + hexadecanoyl-CoA = N-hexadecanoylhexadecasphinganine + CoA + H(+)</text>
        <dbReference type="Rhea" id="RHEA:43040"/>
        <dbReference type="ChEBI" id="CHEBI:15378"/>
        <dbReference type="ChEBI" id="CHEBI:57287"/>
        <dbReference type="ChEBI" id="CHEBI:57379"/>
        <dbReference type="ChEBI" id="CHEBI:71009"/>
        <dbReference type="ChEBI" id="CHEBI:82810"/>
    </reaction>
    <physiologicalReaction direction="left-to-right" evidence="9">
        <dbReference type="Rhea" id="RHEA:43041"/>
    </physiologicalReaction>
</comment>
<comment type="catalytic activity">
    <reaction evidence="12">
        <text>sphing-4-enine + hexadecanoyl-CoA = N-hexadecanoylsphing-4-enine + CoA + H(+)</text>
        <dbReference type="Rhea" id="RHEA:36687"/>
        <dbReference type="ChEBI" id="CHEBI:15378"/>
        <dbReference type="ChEBI" id="CHEBI:57287"/>
        <dbReference type="ChEBI" id="CHEBI:57379"/>
        <dbReference type="ChEBI" id="CHEBI:57756"/>
        <dbReference type="ChEBI" id="CHEBI:72959"/>
    </reaction>
    <physiologicalReaction direction="left-to-right" evidence="12">
        <dbReference type="Rhea" id="RHEA:36688"/>
    </physiologicalReaction>
</comment>
<comment type="catalytic activity">
    <reaction evidence="7">
        <text>2-hydroxyhexadecanoyl-CoA + sphinganine = N-(2-hydroxyhexadecanoyl)-sphinganine + CoA + H(+)</text>
        <dbReference type="Rhea" id="RHEA:36647"/>
        <dbReference type="ChEBI" id="CHEBI:15378"/>
        <dbReference type="ChEBI" id="CHEBI:57287"/>
        <dbReference type="ChEBI" id="CHEBI:57817"/>
        <dbReference type="ChEBI" id="CHEBI:67043"/>
        <dbReference type="ChEBI" id="CHEBI:74115"/>
    </reaction>
    <physiologicalReaction direction="left-to-right" evidence="7">
        <dbReference type="Rhea" id="RHEA:36648"/>
    </physiologicalReaction>
</comment>
<comment type="catalytic activity">
    <reaction evidence="1">
        <text>sphinganine + tetradecanoyl-CoA = N-(tetradecanoyl)-sphinganine + CoA + H(+)</text>
        <dbReference type="Rhea" id="RHEA:36571"/>
        <dbReference type="ChEBI" id="CHEBI:15378"/>
        <dbReference type="ChEBI" id="CHEBI:57287"/>
        <dbReference type="ChEBI" id="CHEBI:57385"/>
        <dbReference type="ChEBI" id="CHEBI:57817"/>
        <dbReference type="ChEBI" id="CHEBI:67045"/>
    </reaction>
    <physiologicalReaction direction="left-to-right" evidence="1">
        <dbReference type="Rhea" id="RHEA:36572"/>
    </physiologicalReaction>
</comment>
<comment type="catalytic activity">
    <reaction evidence="1">
        <text>sphinganine + octadecanoyl-CoA = N-(octadecanoyl)-sphinganine + CoA + H(+)</text>
        <dbReference type="Rhea" id="RHEA:36547"/>
        <dbReference type="ChEBI" id="CHEBI:15378"/>
        <dbReference type="ChEBI" id="CHEBI:57287"/>
        <dbReference type="ChEBI" id="CHEBI:57394"/>
        <dbReference type="ChEBI" id="CHEBI:57817"/>
        <dbReference type="ChEBI" id="CHEBI:67033"/>
    </reaction>
    <physiologicalReaction direction="left-to-right" evidence="1">
        <dbReference type="Rhea" id="RHEA:36548"/>
    </physiologicalReaction>
</comment>
<comment type="catalytic activity">
    <reaction evidence="1">
        <text>sphinganine + (9Z)-octadecenoyl-CoA = N-(9Z-octadecenoyl)-sphinganine + CoA + H(+)</text>
        <dbReference type="Rhea" id="RHEA:36575"/>
        <dbReference type="ChEBI" id="CHEBI:15378"/>
        <dbReference type="ChEBI" id="CHEBI:57287"/>
        <dbReference type="ChEBI" id="CHEBI:57387"/>
        <dbReference type="ChEBI" id="CHEBI:57817"/>
        <dbReference type="ChEBI" id="CHEBI:74100"/>
    </reaction>
    <physiologicalReaction direction="left-to-right" evidence="1">
        <dbReference type="Rhea" id="RHEA:36576"/>
    </physiologicalReaction>
</comment>
<comment type="catalytic activity">
    <reaction evidence="1">
        <text>a fatty acyl-CoA + sphing-4-enine = an N-acylsphing-4-enine + CoA + H(+)</text>
        <dbReference type="Rhea" id="RHEA:23768"/>
        <dbReference type="ChEBI" id="CHEBI:15378"/>
        <dbReference type="ChEBI" id="CHEBI:52639"/>
        <dbReference type="ChEBI" id="CHEBI:57287"/>
        <dbReference type="ChEBI" id="CHEBI:57756"/>
        <dbReference type="ChEBI" id="CHEBI:77636"/>
        <dbReference type="EC" id="2.3.1.24"/>
    </reaction>
    <physiologicalReaction direction="left-to-right" evidence="1">
        <dbReference type="Rhea" id="RHEA:23769"/>
    </physiologicalReaction>
</comment>
<comment type="activity regulation">
    <text evidence="5">Inhibited by fumonisin B1.</text>
</comment>
<comment type="pathway">
    <text evidence="6 7 8 9 10">Lipid metabolism; sphingolipid metabolism.</text>
</comment>
<comment type="subunit">
    <text evidence="13">Interacts with PAQR4; the interaction regulates the stability and activity of CERS5 and is inhibited in presence of ceramides.</text>
</comment>
<comment type="subcellular location">
    <subcellularLocation>
        <location evidence="1">Endoplasmic reticulum membrane</location>
        <topology evidence="2">Multi-pass membrane protein</topology>
    </subcellularLocation>
</comment>
<comment type="alternative products">
    <event type="alternative splicing"/>
    <isoform>
        <id>Q8N5B7-1</id>
        <name>1</name>
        <sequence type="displayed"/>
    </isoform>
    <isoform>
        <id>Q8N5B7-2</id>
        <name>2</name>
        <sequence type="described" ref="VSP_054572"/>
    </isoform>
</comment>
<comment type="domain">
    <text evidence="11">The last loop motif confers selectivity toward palmitoyl-CoA (hexadecanoyl-CoA; C16:0-CoA) as acyl donor.</text>
</comment>
<comment type="PTM">
    <text evidence="10">Phosphorylated at the C-terminus by CK2.</text>
</comment>
<comment type="caution">
    <text evidence="2">Some prediction bioinformatics tools predict the presence of a homeobox domain (By similarity). However, the domain is degenerate and residues that are important for DNA-binding are absent (By similarity).</text>
</comment>
<gene>
    <name evidence="18" type="primary">CERS5</name>
    <name evidence="1" type="synonym">LASS5</name>
</gene>
<name>CERS5_HUMAN</name>
<evidence type="ECO:0000250" key="1">
    <source>
        <dbReference type="UniProtKB" id="Q9D6K9"/>
    </source>
</evidence>
<evidence type="ECO:0000255" key="2"/>
<evidence type="ECO:0000255" key="3">
    <source>
        <dbReference type="PROSITE-ProRule" id="PRU00205"/>
    </source>
</evidence>
<evidence type="ECO:0000256" key="4">
    <source>
        <dbReference type="SAM" id="MobiDB-lite"/>
    </source>
</evidence>
<evidence type="ECO:0000269" key="5">
    <source>
    </source>
</evidence>
<evidence type="ECO:0000269" key="6">
    <source>
    </source>
</evidence>
<evidence type="ECO:0000269" key="7">
    <source>
    </source>
</evidence>
<evidence type="ECO:0000269" key="8">
    <source>
    </source>
</evidence>
<evidence type="ECO:0000269" key="9">
    <source>
    </source>
</evidence>
<evidence type="ECO:0000269" key="10">
    <source>
    </source>
</evidence>
<evidence type="ECO:0000269" key="11">
    <source>
    </source>
</evidence>
<evidence type="ECO:0000269" key="12">
    <source>
    </source>
</evidence>
<evidence type="ECO:0000269" key="13">
    <source>
    </source>
</evidence>
<evidence type="ECO:0000303" key="14">
    <source>
    </source>
</evidence>
<evidence type="ECO:0000305" key="15"/>
<evidence type="ECO:0000305" key="16">
    <source>
    </source>
</evidence>
<evidence type="ECO:0000305" key="17">
    <source>
    </source>
</evidence>
<evidence type="ECO:0000312" key="18">
    <source>
        <dbReference type="HGNC" id="HGNC:23749"/>
    </source>
</evidence>
<organism>
    <name type="scientific">Homo sapiens</name>
    <name type="common">Human</name>
    <dbReference type="NCBI Taxonomy" id="9606"/>
    <lineage>
        <taxon>Eukaryota</taxon>
        <taxon>Metazoa</taxon>
        <taxon>Chordata</taxon>
        <taxon>Craniata</taxon>
        <taxon>Vertebrata</taxon>
        <taxon>Euteleostomi</taxon>
        <taxon>Mammalia</taxon>
        <taxon>Eutheria</taxon>
        <taxon>Euarchontoglires</taxon>
        <taxon>Primates</taxon>
        <taxon>Haplorrhini</taxon>
        <taxon>Catarrhini</taxon>
        <taxon>Hominidae</taxon>
        <taxon>Homo</taxon>
    </lineage>
</organism>